<evidence type="ECO:0000255" key="1">
    <source>
        <dbReference type="PROSITE-ProRule" id="PRU00541"/>
    </source>
</evidence>
<evidence type="ECO:0000255" key="2">
    <source>
        <dbReference type="PROSITE-ProRule" id="PRU00542"/>
    </source>
</evidence>
<evidence type="ECO:0000256" key="3">
    <source>
        <dbReference type="SAM" id="MobiDB-lite"/>
    </source>
</evidence>
<evidence type="ECO:0000305" key="4"/>
<evidence type="ECO:0007829" key="5">
    <source>
        <dbReference type="PDB" id="6EUD"/>
    </source>
</evidence>
<evidence type="ECO:0007829" key="6">
    <source>
        <dbReference type="PDB" id="6HEG"/>
    </source>
</evidence>
<accession>P37024</accession>
<accession>P75663</accession>
<accession>Q2MCG2</accession>
<dbReference type="EC" id="3.6.4.13"/>
<dbReference type="EMBL" id="U00096">
    <property type="protein sequence ID" value="AAC73259.2"/>
    <property type="molecule type" value="Genomic_DNA"/>
</dbReference>
<dbReference type="EMBL" id="AP009048">
    <property type="protein sequence ID" value="BAE76044.1"/>
    <property type="molecule type" value="Genomic_DNA"/>
</dbReference>
<dbReference type="EMBL" id="D42122">
    <property type="protein sequence ID" value="BAA21040.1"/>
    <property type="molecule type" value="Genomic_DNA"/>
</dbReference>
<dbReference type="PIR" id="D64738">
    <property type="entry name" value="D64738"/>
</dbReference>
<dbReference type="RefSeq" id="NP_414690.4">
    <property type="nucleotide sequence ID" value="NC_000913.3"/>
</dbReference>
<dbReference type="RefSeq" id="WP_001350480.1">
    <property type="nucleotide sequence ID" value="NZ_LN832404.1"/>
</dbReference>
<dbReference type="PDB" id="6EUD">
    <property type="method" value="X-ray"/>
    <property type="resolution" value="2.40 A"/>
    <property type="chains" value="A=1-809"/>
</dbReference>
<dbReference type="PDB" id="6HEG">
    <property type="method" value="X-ray"/>
    <property type="resolution" value="3.02 A"/>
    <property type="chains" value="A=1-809"/>
</dbReference>
<dbReference type="PDBsum" id="6EUD"/>
<dbReference type="PDBsum" id="6HEG"/>
<dbReference type="SMR" id="P37024"/>
<dbReference type="BioGRID" id="4261401">
    <property type="interactions" value="90"/>
</dbReference>
<dbReference type="DIP" id="DIP-9938N"/>
<dbReference type="FunCoup" id="P37024">
    <property type="interactions" value="206"/>
</dbReference>
<dbReference type="IntAct" id="P37024">
    <property type="interactions" value="10"/>
</dbReference>
<dbReference type="STRING" id="511145.b0148"/>
<dbReference type="PaxDb" id="511145-b0148"/>
<dbReference type="EnsemblBacteria" id="AAC73259">
    <property type="protein sequence ID" value="AAC73259"/>
    <property type="gene ID" value="b0148"/>
</dbReference>
<dbReference type="GeneID" id="944845"/>
<dbReference type="KEGG" id="ecj:JW0144"/>
<dbReference type="KEGG" id="eco:b0148"/>
<dbReference type="PATRIC" id="fig|1411691.4.peg.2133"/>
<dbReference type="EchoBASE" id="EB2233"/>
<dbReference type="eggNOG" id="COG1643">
    <property type="taxonomic scope" value="Bacteria"/>
</dbReference>
<dbReference type="HOGENOM" id="CLU_001832_5_6_6"/>
<dbReference type="InParanoid" id="P37024"/>
<dbReference type="OMA" id="VCYRLWD"/>
<dbReference type="OrthoDB" id="9805617at2"/>
<dbReference type="PhylomeDB" id="P37024"/>
<dbReference type="BioCyc" id="EcoCyc:EG12329-MONOMER"/>
<dbReference type="BRENDA" id="3.6.1.15">
    <property type="organism ID" value="2026"/>
</dbReference>
<dbReference type="PRO" id="PR:P37024"/>
<dbReference type="Proteomes" id="UP000000625">
    <property type="component" value="Chromosome"/>
</dbReference>
<dbReference type="GO" id="GO:0005524">
    <property type="term" value="F:ATP binding"/>
    <property type="evidence" value="ECO:0007669"/>
    <property type="project" value="UniProtKB-KW"/>
</dbReference>
<dbReference type="GO" id="GO:0016887">
    <property type="term" value="F:ATP hydrolysis activity"/>
    <property type="evidence" value="ECO:0007669"/>
    <property type="project" value="RHEA"/>
</dbReference>
<dbReference type="GO" id="GO:0017111">
    <property type="term" value="F:ribonucleoside triphosphate phosphatase activity"/>
    <property type="evidence" value="ECO:0000314"/>
    <property type="project" value="EcoCyc"/>
</dbReference>
<dbReference type="GO" id="GO:0003724">
    <property type="term" value="F:RNA helicase activity"/>
    <property type="evidence" value="ECO:0007669"/>
    <property type="project" value="UniProtKB-EC"/>
</dbReference>
<dbReference type="GO" id="GO:0003727">
    <property type="term" value="F:single-stranded RNA binding"/>
    <property type="evidence" value="ECO:0000314"/>
    <property type="project" value="EcoCyc"/>
</dbReference>
<dbReference type="CDD" id="cd17990">
    <property type="entry name" value="DEXHc_HrpB"/>
    <property type="match status" value="1"/>
</dbReference>
<dbReference type="CDD" id="cd18791">
    <property type="entry name" value="SF2_C_RHA"/>
    <property type="match status" value="1"/>
</dbReference>
<dbReference type="FunFam" id="3.40.50.300:FF:002125">
    <property type="entry name" value="ATP-dependent helicase HrpB"/>
    <property type="match status" value="1"/>
</dbReference>
<dbReference type="Gene3D" id="1.20.120.1080">
    <property type="match status" value="1"/>
</dbReference>
<dbReference type="Gene3D" id="3.40.50.300">
    <property type="entry name" value="P-loop containing nucleotide triphosphate hydrolases"/>
    <property type="match status" value="2"/>
</dbReference>
<dbReference type="InterPro" id="IPR056329">
    <property type="entry name" value="CON_HrpB"/>
</dbReference>
<dbReference type="InterPro" id="IPR011545">
    <property type="entry name" value="DEAD/DEAH_box_helicase_dom"/>
</dbReference>
<dbReference type="InterPro" id="IPR007502">
    <property type="entry name" value="Helicase-assoc_dom"/>
</dbReference>
<dbReference type="InterPro" id="IPR014001">
    <property type="entry name" value="Helicase_ATP-bd"/>
</dbReference>
<dbReference type="InterPro" id="IPR001650">
    <property type="entry name" value="Helicase_C-like"/>
</dbReference>
<dbReference type="InterPro" id="IPR010225">
    <property type="entry name" value="HrpB"/>
</dbReference>
<dbReference type="InterPro" id="IPR049614">
    <property type="entry name" value="HrpB_DEXH"/>
</dbReference>
<dbReference type="InterPro" id="IPR027417">
    <property type="entry name" value="P-loop_NTPase"/>
</dbReference>
<dbReference type="InterPro" id="IPR013689">
    <property type="entry name" value="RNA_helicase_ATP-dep_HrpB_C"/>
</dbReference>
<dbReference type="NCBIfam" id="TIGR01970">
    <property type="entry name" value="DEAH_box_HrpB"/>
    <property type="match status" value="1"/>
</dbReference>
<dbReference type="NCBIfam" id="NF008662">
    <property type="entry name" value="PRK11664.1"/>
    <property type="match status" value="1"/>
</dbReference>
<dbReference type="PANTHER" id="PTHR43519">
    <property type="entry name" value="ATP-DEPENDENT RNA HELICASE HRPB"/>
    <property type="match status" value="1"/>
</dbReference>
<dbReference type="PANTHER" id="PTHR43519:SF1">
    <property type="entry name" value="ATP-DEPENDENT RNA HELICASE HRPB"/>
    <property type="match status" value="1"/>
</dbReference>
<dbReference type="Pfam" id="PF24473">
    <property type="entry name" value="CON_HrpB"/>
    <property type="match status" value="1"/>
</dbReference>
<dbReference type="Pfam" id="PF00270">
    <property type="entry name" value="DEAD"/>
    <property type="match status" value="1"/>
</dbReference>
<dbReference type="Pfam" id="PF00271">
    <property type="entry name" value="Helicase_C"/>
    <property type="match status" value="1"/>
</dbReference>
<dbReference type="Pfam" id="PF08482">
    <property type="entry name" value="HrpB_C"/>
    <property type="match status" value="1"/>
</dbReference>
<dbReference type="PIRSF" id="PIRSF005496">
    <property type="entry name" value="ATP_hel_hrpB"/>
    <property type="match status" value="1"/>
</dbReference>
<dbReference type="SMART" id="SM00487">
    <property type="entry name" value="DEXDc"/>
    <property type="match status" value="1"/>
</dbReference>
<dbReference type="SMART" id="SM00847">
    <property type="entry name" value="HA2"/>
    <property type="match status" value="1"/>
</dbReference>
<dbReference type="SMART" id="SM00490">
    <property type="entry name" value="HELICc"/>
    <property type="match status" value="1"/>
</dbReference>
<dbReference type="SUPFAM" id="SSF52540">
    <property type="entry name" value="P-loop containing nucleoside triphosphate hydrolases"/>
    <property type="match status" value="1"/>
</dbReference>
<dbReference type="PROSITE" id="PS51192">
    <property type="entry name" value="HELICASE_ATP_BIND_1"/>
    <property type="match status" value="1"/>
</dbReference>
<dbReference type="PROSITE" id="PS51194">
    <property type="entry name" value="HELICASE_CTER"/>
    <property type="match status" value="1"/>
</dbReference>
<comment type="catalytic activity">
    <reaction>
        <text>ATP + H2O = ADP + phosphate + H(+)</text>
        <dbReference type="Rhea" id="RHEA:13065"/>
        <dbReference type="ChEBI" id="CHEBI:15377"/>
        <dbReference type="ChEBI" id="CHEBI:15378"/>
        <dbReference type="ChEBI" id="CHEBI:30616"/>
        <dbReference type="ChEBI" id="CHEBI:43474"/>
        <dbReference type="ChEBI" id="CHEBI:456216"/>
        <dbReference type="EC" id="3.6.4.13"/>
    </reaction>
</comment>
<comment type="similarity">
    <text evidence="4">Belongs to the DEAD box helicase family.</text>
</comment>
<proteinExistence type="evidence at protein level"/>
<name>HRPB_ECOLI</name>
<feature type="chain" id="PRO_0000055180" description="ATP-dependent RNA helicase HrpB">
    <location>
        <begin position="1"/>
        <end position="809"/>
    </location>
</feature>
<feature type="domain" description="Helicase ATP-binding" evidence="1">
    <location>
        <begin position="14"/>
        <end position="177"/>
    </location>
</feature>
<feature type="domain" description="Helicase C-terminal" evidence="2">
    <location>
        <begin position="195"/>
        <end position="368"/>
    </location>
</feature>
<feature type="region of interest" description="Disordered" evidence="3">
    <location>
        <begin position="788"/>
        <end position="809"/>
    </location>
</feature>
<feature type="short sequence motif" description="DEFH box">
    <location>
        <begin position="123"/>
        <end position="126"/>
    </location>
</feature>
<feature type="binding site" evidence="1">
    <location>
        <begin position="27"/>
        <end position="34"/>
    </location>
    <ligand>
        <name>ATP</name>
        <dbReference type="ChEBI" id="CHEBI:30616"/>
    </ligand>
</feature>
<feature type="helix" evidence="5">
    <location>
        <begin position="7"/>
        <end position="9"/>
    </location>
</feature>
<feature type="helix" evidence="5">
    <location>
        <begin position="10"/>
        <end position="17"/>
    </location>
</feature>
<feature type="strand" evidence="5">
    <location>
        <begin position="23"/>
        <end position="26"/>
    </location>
</feature>
<feature type="helix" evidence="5">
    <location>
        <begin position="29"/>
        <end position="31"/>
    </location>
</feature>
<feature type="turn" evidence="5">
    <location>
        <begin position="33"/>
        <end position="36"/>
    </location>
</feature>
<feature type="helix" evidence="5">
    <location>
        <begin position="37"/>
        <end position="42"/>
    </location>
</feature>
<feature type="strand" evidence="5">
    <location>
        <begin position="49"/>
        <end position="54"/>
    </location>
</feature>
<feature type="helix" evidence="5">
    <location>
        <begin position="58"/>
        <end position="71"/>
    </location>
</feature>
<feature type="turn" evidence="6">
    <location>
        <begin position="75"/>
        <end position="77"/>
    </location>
</feature>
<feature type="strand" evidence="5">
    <location>
        <begin position="78"/>
        <end position="84"/>
    </location>
</feature>
<feature type="strand" evidence="5">
    <location>
        <begin position="87"/>
        <end position="89"/>
    </location>
</feature>
<feature type="strand" evidence="5">
    <location>
        <begin position="95"/>
        <end position="99"/>
    </location>
</feature>
<feature type="helix" evidence="5">
    <location>
        <begin position="103"/>
        <end position="110"/>
    </location>
</feature>
<feature type="strand" evidence="5">
    <location>
        <begin position="117"/>
        <end position="122"/>
    </location>
</feature>
<feature type="helix" evidence="5">
    <location>
        <begin position="125"/>
        <end position="127"/>
    </location>
</feature>
<feature type="helix" evidence="5">
    <location>
        <begin position="130"/>
        <end position="142"/>
    </location>
</feature>
<feature type="turn" evidence="5">
    <location>
        <begin position="143"/>
        <end position="146"/>
    </location>
</feature>
<feature type="strand" evidence="5">
    <location>
        <begin position="151"/>
        <end position="159"/>
    </location>
</feature>
<feature type="helix" evidence="5">
    <location>
        <begin position="164"/>
        <end position="167"/>
    </location>
</feature>
<feature type="strand" evidence="5">
    <location>
        <begin position="173"/>
        <end position="175"/>
    </location>
</feature>
<feature type="strand" evidence="5">
    <location>
        <begin position="183"/>
        <end position="187"/>
    </location>
</feature>
<feature type="strand" evidence="6">
    <location>
        <begin position="192"/>
        <end position="194"/>
    </location>
</feature>
<feature type="helix" evidence="5">
    <location>
        <begin position="196"/>
        <end position="210"/>
    </location>
</feature>
<feature type="strand" evidence="5">
    <location>
        <begin position="213"/>
        <end position="218"/>
    </location>
</feature>
<feature type="helix" evidence="5">
    <location>
        <begin position="222"/>
        <end position="233"/>
    </location>
</feature>
<feature type="strand" evidence="5">
    <location>
        <begin position="240"/>
        <end position="245"/>
    </location>
</feature>
<feature type="helix" evidence="5">
    <location>
        <begin position="253"/>
        <end position="258"/>
    </location>
</feature>
<feature type="strand" evidence="5">
    <location>
        <begin position="266"/>
        <end position="271"/>
    </location>
</feature>
<feature type="helix" evidence="5">
    <location>
        <begin position="273"/>
        <end position="275"/>
    </location>
</feature>
<feature type="turn" evidence="5">
    <location>
        <begin position="276"/>
        <end position="278"/>
    </location>
</feature>
<feature type="strand" evidence="5">
    <location>
        <begin position="283"/>
        <end position="289"/>
    </location>
</feature>
<feature type="strand" evidence="5">
    <location>
        <begin position="292"/>
        <end position="298"/>
    </location>
</feature>
<feature type="turn" evidence="5">
    <location>
        <begin position="300"/>
        <end position="302"/>
    </location>
</feature>
<feature type="strand" evidence="5">
    <location>
        <begin position="305"/>
        <end position="311"/>
    </location>
</feature>
<feature type="helix" evidence="5">
    <location>
        <begin position="314"/>
        <end position="322"/>
    </location>
</feature>
<feature type="strand" evidence="5">
    <location>
        <begin position="325"/>
        <end position="336"/>
    </location>
</feature>
<feature type="helix" evidence="5">
    <location>
        <begin position="338"/>
        <end position="343"/>
    </location>
</feature>
<feature type="helix" evidence="5">
    <location>
        <begin position="351"/>
        <end position="353"/>
    </location>
</feature>
<feature type="helix" evidence="5">
    <location>
        <begin position="358"/>
        <end position="367"/>
    </location>
</feature>
<feature type="helix" evidence="5">
    <location>
        <begin position="372"/>
        <end position="374"/>
    </location>
</feature>
<feature type="helix" evidence="5">
    <location>
        <begin position="383"/>
        <end position="395"/>
    </location>
</feature>
<feature type="helix" evidence="5">
    <location>
        <begin position="406"/>
        <end position="414"/>
    </location>
</feature>
<feature type="helix" evidence="5">
    <location>
        <begin position="418"/>
        <end position="426"/>
    </location>
</feature>
<feature type="helix" evidence="5">
    <location>
        <begin position="430"/>
        <end position="444"/>
    </location>
</feature>
<feature type="strand" evidence="5">
    <location>
        <begin position="448"/>
        <end position="450"/>
    </location>
</feature>
<feature type="helix" evidence="5">
    <location>
        <begin position="454"/>
        <end position="459"/>
    </location>
</feature>
<feature type="helix" evidence="5">
    <location>
        <begin position="463"/>
        <end position="476"/>
    </location>
</feature>
<feature type="helix" evidence="5">
    <location>
        <begin position="485"/>
        <end position="487"/>
    </location>
</feature>
<feature type="helix" evidence="5">
    <location>
        <begin position="488"/>
        <end position="495"/>
    </location>
</feature>
<feature type="helix" evidence="5">
    <location>
        <begin position="497"/>
        <end position="499"/>
    </location>
</feature>
<feature type="strand" evidence="5">
    <location>
        <begin position="500"/>
        <end position="503"/>
    </location>
</feature>
<feature type="strand" evidence="5">
    <location>
        <begin position="509"/>
        <end position="512"/>
    </location>
</feature>
<feature type="strand" evidence="5">
    <location>
        <begin position="517"/>
        <end position="519"/>
    </location>
</feature>
<feature type="helix" evidence="5">
    <location>
        <begin position="525"/>
        <end position="528"/>
    </location>
</feature>
<feature type="strand" evidence="5">
    <location>
        <begin position="529"/>
        <end position="539"/>
    </location>
</feature>
<feature type="strand" evidence="5">
    <location>
        <begin position="544"/>
        <end position="553"/>
    </location>
</feature>
<feature type="helix" evidence="5">
    <location>
        <begin position="556"/>
        <end position="562"/>
    </location>
</feature>
<feature type="helix" evidence="5">
    <location>
        <begin position="564"/>
        <end position="566"/>
    </location>
</feature>
<feature type="strand" evidence="5">
    <location>
        <begin position="568"/>
        <end position="576"/>
    </location>
</feature>
<feature type="turn" evidence="5">
    <location>
        <begin position="577"/>
        <end position="580"/>
    </location>
</feature>
<feature type="strand" evidence="5">
    <location>
        <begin position="581"/>
        <end position="590"/>
    </location>
</feature>
<feature type="strand" evidence="5">
    <location>
        <begin position="593"/>
        <end position="599"/>
    </location>
</feature>
<feature type="helix" evidence="5">
    <location>
        <begin position="605"/>
        <end position="619"/>
    </location>
</feature>
<feature type="helix" evidence="5">
    <location>
        <begin position="621"/>
        <end position="623"/>
    </location>
</feature>
<feature type="helix" evidence="5">
    <location>
        <begin position="628"/>
        <end position="643"/>
    </location>
</feature>
<feature type="helix" evidence="5">
    <location>
        <begin position="654"/>
        <end position="659"/>
    </location>
</feature>
<feature type="helix" evidence="5">
    <location>
        <begin position="661"/>
        <end position="664"/>
    </location>
</feature>
<feature type="helix" evidence="5">
    <location>
        <begin position="666"/>
        <end position="668"/>
    </location>
</feature>
<feature type="helix" evidence="5">
    <location>
        <begin position="675"/>
        <end position="680"/>
    </location>
</feature>
<feature type="helix" evidence="5">
    <location>
        <begin position="683"/>
        <end position="689"/>
    </location>
</feature>
<feature type="helix" evidence="5">
    <location>
        <begin position="693"/>
        <end position="702"/>
    </location>
</feature>
<feature type="strand" evidence="5">
    <location>
        <begin position="705"/>
        <end position="708"/>
    </location>
</feature>
<feature type="strand" evidence="5">
    <location>
        <begin position="714"/>
        <end position="718"/>
    </location>
</feature>
<feature type="strand" evidence="5">
    <location>
        <begin position="721"/>
        <end position="723"/>
    </location>
</feature>
<feature type="strand" evidence="5">
    <location>
        <begin position="726"/>
        <end position="730"/>
    </location>
</feature>
<feature type="helix" evidence="5">
    <location>
        <begin position="731"/>
        <end position="734"/>
    </location>
</feature>
<feature type="turn" evidence="5">
    <location>
        <begin position="744"/>
        <end position="747"/>
    </location>
</feature>
<feature type="strand" evidence="5">
    <location>
        <begin position="751"/>
        <end position="755"/>
    </location>
</feature>
<feature type="strand" evidence="5">
    <location>
        <begin position="761"/>
        <end position="766"/>
    </location>
</feature>
<feature type="helix" evidence="5">
    <location>
        <begin position="768"/>
        <end position="773"/>
    </location>
</feature>
<feature type="helix" evidence="5">
    <location>
        <begin position="776"/>
        <end position="786"/>
    </location>
</feature>
<feature type="turn" evidence="6">
    <location>
        <begin position="788"/>
        <end position="790"/>
    </location>
</feature>
<feature type="turn" evidence="5">
    <location>
        <begin position="796"/>
        <end position="798"/>
    </location>
</feature>
<reference key="1">
    <citation type="journal article" date="1994" name="Nucleic Acids Res.">
        <title>Systematic sequencing of the Escherichia coli genome: analysis of the 2.4-4.1 min (110,917-193,643 bp) region.</title>
        <authorList>
            <person name="Fujita N."/>
            <person name="Mori H."/>
            <person name="Yura T."/>
            <person name="Ishihama A."/>
        </authorList>
    </citation>
    <scope>NUCLEOTIDE SEQUENCE [LARGE SCALE GENOMIC DNA]</scope>
    <source>
        <strain>K12 / W3110 / ATCC 27325 / DSM 5911</strain>
    </source>
</reference>
<reference key="2">
    <citation type="journal article" date="1997" name="Science">
        <title>The complete genome sequence of Escherichia coli K-12.</title>
        <authorList>
            <person name="Blattner F.R."/>
            <person name="Plunkett G. III"/>
            <person name="Bloch C.A."/>
            <person name="Perna N.T."/>
            <person name="Burland V."/>
            <person name="Riley M."/>
            <person name="Collado-Vides J."/>
            <person name="Glasner J.D."/>
            <person name="Rode C.K."/>
            <person name="Mayhew G.F."/>
            <person name="Gregor J."/>
            <person name="Davis N.W."/>
            <person name="Kirkpatrick H.A."/>
            <person name="Goeden M.A."/>
            <person name="Rose D.J."/>
            <person name="Mau B."/>
            <person name="Shao Y."/>
        </authorList>
    </citation>
    <scope>NUCLEOTIDE SEQUENCE [LARGE SCALE GENOMIC DNA]</scope>
    <source>
        <strain>K12 / MG1655 / ATCC 47076</strain>
    </source>
</reference>
<reference key="3">
    <citation type="journal article" date="2006" name="Mol. Syst. Biol.">
        <title>Highly accurate genome sequences of Escherichia coli K-12 strains MG1655 and W3110.</title>
        <authorList>
            <person name="Hayashi K."/>
            <person name="Morooka N."/>
            <person name="Yamamoto Y."/>
            <person name="Fujita K."/>
            <person name="Isono K."/>
            <person name="Choi S."/>
            <person name="Ohtsubo E."/>
            <person name="Baba T."/>
            <person name="Wanner B.L."/>
            <person name="Mori H."/>
            <person name="Horiuchi T."/>
        </authorList>
    </citation>
    <scope>NUCLEOTIDE SEQUENCE [LARGE SCALE GENOMIC DNA]</scope>
    <source>
        <strain>K12 / W3110 / ATCC 27325 / DSM 5911</strain>
    </source>
</reference>
<reference key="4">
    <citation type="journal article" date="1995" name="Nucleic Acids Res.">
        <title>Cloning and characterization of the hrpA gene in the terC region of Escherichia coli that is highly similar to the DEAH family RNA helicase genes of Saccharomyces cerevisiae.</title>
        <authorList>
            <person name="Moriya H."/>
            <person name="Kasai H."/>
            <person name="Isono K."/>
        </authorList>
    </citation>
    <scope>NUCLEOTIDE SEQUENCE [GENOMIC DNA] OF 61-156</scope>
    <source>
        <strain>K12 / W3110 / ATCC 27325 / DSM 5911</strain>
    </source>
</reference>
<organism>
    <name type="scientific">Escherichia coli (strain K12)</name>
    <dbReference type="NCBI Taxonomy" id="83333"/>
    <lineage>
        <taxon>Bacteria</taxon>
        <taxon>Pseudomonadati</taxon>
        <taxon>Pseudomonadota</taxon>
        <taxon>Gammaproteobacteria</taxon>
        <taxon>Enterobacterales</taxon>
        <taxon>Enterobacteriaceae</taxon>
        <taxon>Escherichia</taxon>
    </lineage>
</organism>
<keyword id="KW-0002">3D-structure</keyword>
<keyword id="KW-0067">ATP-binding</keyword>
<keyword id="KW-0347">Helicase</keyword>
<keyword id="KW-0378">Hydrolase</keyword>
<keyword id="KW-0547">Nucleotide-binding</keyword>
<keyword id="KW-1185">Reference proteome</keyword>
<sequence>MSSLPVAAVLPELLTALDCAPQVLLSAPTGAGKSTWLPLQLLAHPGINGKIILLEPRRLAARNVAQRLAELLNEKPGDTVGYRMRAQNCVGPNTRLEVVTEGVLTRMIQRDPELSGVGLVILDEFHERSLQADLALALLLDVQQGLRDDLKLLIMSATLDNDRLQQMLPEAPVVISEGRSFPVERRYLPLPAHQRFDDAVAVATAEMLRQESGSLLLFLPGVGEIQRVQEQLASRIGSDVLLCPLYGALSLNDQRKAILPAPQGMRKVVLATNIAETSLTIEGIRLVVDCAQERVARFDPRTGLTRLITQRVSQASMTQRAGRAGRLEPGISLHLIAKEQAERAAAQSEPEILQSDLSGLLMELLQWGCSDPAQMSWLDQPPVVNLLAAKRLLQMLGALEGERLSAQGQKMAALGNDPRLAAMLVSAKNDDEAATAAKIAAILEEPPRMGNSDLGVAFSRNQPAWQQRSQQLLKRLNVRGGEADSSLIAPLLAGAFADRIARRRGQDGRYQLANGMGAMLDANDALSRHEWLIAPLLLQGSASPDARILLALLVDIDELVQRCPQLVQQSDTVEWDDAQGTLKAWRRLQIGQLTVKVQPLAKPSEDELHQAMLNGIRDKGLSVLNWTAEAEQLRLRLLCAAKWLPEYDWPAVDDESLLAALETWLLPHMTGVHSLRGLKSLDIYQALRGLLDWGMQQRLDSELPAHYTVPTGSRIAIRYHEDNPPALAVRMQEMFGEATNPTIAQGRVPLVLELLSPAQRPLQITRDLSDFWKGAYREVQKEMKGRYPKHVWPDDPANTAPTRRTKKYS</sequence>
<gene>
    <name type="primary">hrpB</name>
    <name type="synonym">yadO</name>
    <name type="ordered locus">b0148</name>
    <name type="ordered locus">JW0144</name>
</gene>
<protein>
    <recommendedName>
        <fullName>ATP-dependent RNA helicase HrpB</fullName>
        <ecNumber>3.6.4.13</ecNumber>
    </recommendedName>
</protein>